<name>ATXR2_ARATH</name>
<proteinExistence type="evidence at protein level"/>
<feature type="chain" id="PRO_0000233359" description="Histone-lysine N-methyltransferase ATXR2">
    <location>
        <begin position="1"/>
        <end position="473"/>
    </location>
</feature>
<feature type="domain" description="SET" evidence="3">
    <location>
        <begin position="33"/>
        <end position="441"/>
    </location>
</feature>
<feature type="zinc finger region" description="MYND-type; degenerate" evidence="2">
    <location>
        <begin position="134"/>
        <end position="203"/>
    </location>
</feature>
<feature type="binding site" evidence="2">
    <location>
        <position position="176"/>
    </location>
    <ligand>
        <name>Zn(2+)</name>
        <dbReference type="ChEBI" id="CHEBI:29105"/>
    </ligand>
</feature>
<feature type="binding site" evidence="2">
    <location>
        <position position="180"/>
    </location>
    <ligand>
        <name>Zn(2+)</name>
        <dbReference type="ChEBI" id="CHEBI:29105"/>
    </ligand>
</feature>
<feature type="binding site" evidence="2">
    <location>
        <position position="199"/>
    </location>
    <ligand>
        <name>Zn(2+)</name>
        <dbReference type="ChEBI" id="CHEBI:29105"/>
    </ligand>
</feature>
<feature type="binding site" evidence="2">
    <location>
        <position position="203"/>
    </location>
    <ligand>
        <name>Zn(2+)</name>
        <dbReference type="ChEBI" id="CHEBI:29105"/>
    </ligand>
</feature>
<feature type="binding site" evidence="3">
    <location>
        <position position="440"/>
    </location>
    <ligand>
        <name>S-adenosyl-L-methionine</name>
        <dbReference type="ChEBI" id="CHEBI:59789"/>
    </ligand>
</feature>
<comment type="function">
    <text evidence="4 5 6">Histone methyltransferase that methylates 'Lys-36' (H3K36me) of histone H3 to produce H3K36me3 (PubMed:29184030). Promotes early stages of cellular dedifferentiation through H3K36me3-dependent, and to a lesser degree H3K4me3-dependent, activation of Lateral organ Boundaries-Domain (LBD) (e.g. LBD16 and LBD29) genes (PubMed:29184030). Positive regulator of root organogenesis including lateral root formation as well as adventitious root formation from wounded leaf tissues (PubMed:29517958). Recruited by JMJ30/ARF (e.g. ARF7 and ARF19) complexes to promote the deposition of H3K36me3 and, to a lower extent, H3K4me3 at LBD genes promoters, thus ensuring their stable activation during callus formation on callus-inducing medium (CIM) (PubMed:29184030, PubMed:29923261).</text>
</comment>
<comment type="catalytic activity">
    <reaction evidence="1">
        <text>L-lysyl-[histone] + S-adenosyl-L-methionine = N(6)-methyl-L-lysyl-[histone] + S-adenosyl-L-homocysteine + H(+)</text>
        <dbReference type="Rhea" id="RHEA:10024"/>
        <dbReference type="Rhea" id="RHEA-COMP:9845"/>
        <dbReference type="Rhea" id="RHEA-COMP:9846"/>
        <dbReference type="ChEBI" id="CHEBI:15378"/>
        <dbReference type="ChEBI" id="CHEBI:29969"/>
        <dbReference type="ChEBI" id="CHEBI:57856"/>
        <dbReference type="ChEBI" id="CHEBI:59789"/>
        <dbReference type="ChEBI" id="CHEBI:61929"/>
    </reaction>
</comment>
<comment type="subunit">
    <text evidence="4 6">Interacts with JMJ30 (PubMed:29923261). Binds to ARF7 and ARF19 in the nucleus (PubMed:29184030).</text>
</comment>
<comment type="subcellular location">
    <subcellularLocation>
        <location evidence="4">Nucleus</location>
    </subcellularLocation>
</comment>
<comment type="disruption phenotype">
    <text evidence="4 5 6">Reduced callus formation from somatic cells associated with an impaired reduction of H3K9me3 deposition and lower accumulation of H3K36me3 at LBD16 and LBD29 loci during leaf-to-callus transition (PubMed:29184030, PubMed:29923261). Lower lateral root formation and impaired ability to form adventitious root formation from wounded leaf tissues (PubMed:29517958). The double mutant jmj30-2 atxr2-1 is strongly impaired in callus formation (PubMed:29923261).</text>
</comment>
<comment type="similarity">
    <text evidence="3">Belongs to the class V-like SAM-binding methyltransferase superfamily. Histone-lysine methyltransferase family. TRX/MLL subfamily.</text>
</comment>
<comment type="sequence caution" evidence="8">
    <conflict type="erroneous gene model prediction">
        <sequence resource="EMBL-CDS" id="BAB02844"/>
    </conflict>
</comment>
<sequence>MDSVYKTDENFAADVAALLAPLPTPQLQEYFNKLITSRRCNGIEVKNNGTIGKGVYANSEFDEDELILKDEILVGIQHSSNKVDCLVCSFCFRFIGSIEKQIGRKLYFKNLGVSGCCDDDSSEEDECVKYNGNEEQCGGSSSSHNTLPEGVVSSLMNGEMALPHTDKFPLPSPLSCPGGCQEAFYCSESCAAADWESSHSLLCTGERSESISREALGEFIKHANDTNDIFLLAAKAIAFTILRYRKLKAEHVDKKAKQSEPKQSLLLEAWKPVSIGYKRRWWDCIALPDDVDPTDEGAFRMQIKNLACTSLELLKIAIFDKECEALFSLEIYGNIIGMFELNNLDLVVASPVEDYFLYIDDLPDAEKEETEEITRPFLDALGDEYSDCCQGTAFFPLQSCMNHSCCPNAKAFKREEDRDGQAVIIALRRISKNEEVTISYIDEELPYKERQALLADYGFSCKCSKCLEDSSSI</sequence>
<keyword id="KW-0156">Chromatin regulator</keyword>
<keyword id="KW-0479">Metal-binding</keyword>
<keyword id="KW-0489">Methyltransferase</keyword>
<keyword id="KW-0539">Nucleus</keyword>
<keyword id="KW-1185">Reference proteome</keyword>
<keyword id="KW-0949">S-adenosyl-L-methionine</keyword>
<keyword id="KW-0808">Transferase</keyword>
<keyword id="KW-0862">Zinc</keyword>
<keyword id="KW-0863">Zinc-finger</keyword>
<organism>
    <name type="scientific">Arabidopsis thaliana</name>
    <name type="common">Mouse-ear cress</name>
    <dbReference type="NCBI Taxonomy" id="3702"/>
    <lineage>
        <taxon>Eukaryota</taxon>
        <taxon>Viridiplantae</taxon>
        <taxon>Streptophyta</taxon>
        <taxon>Embryophyta</taxon>
        <taxon>Tracheophyta</taxon>
        <taxon>Spermatophyta</taxon>
        <taxon>Magnoliopsida</taxon>
        <taxon>eudicotyledons</taxon>
        <taxon>Gunneridae</taxon>
        <taxon>Pentapetalae</taxon>
        <taxon>rosids</taxon>
        <taxon>malvids</taxon>
        <taxon>Brassicales</taxon>
        <taxon>Brassicaceae</taxon>
        <taxon>Camelineae</taxon>
        <taxon>Arabidopsis</taxon>
    </lineage>
</organism>
<reference key="1">
    <citation type="journal article" date="2000" name="DNA Res.">
        <title>Structural analysis of Arabidopsis thaliana chromosome 3. I. Sequence features of the regions of 4,504,864 bp covered by sixty P1 and TAC clones.</title>
        <authorList>
            <person name="Sato S."/>
            <person name="Nakamura Y."/>
            <person name="Kaneko T."/>
            <person name="Katoh T."/>
            <person name="Asamizu E."/>
            <person name="Tabata S."/>
        </authorList>
    </citation>
    <scope>NUCLEOTIDE SEQUENCE [LARGE SCALE GENOMIC DNA]</scope>
    <source>
        <strain>cv. Columbia</strain>
    </source>
</reference>
<reference key="2">
    <citation type="journal article" date="2017" name="Plant J.">
        <title>Araport11: a complete reannotation of the Arabidopsis thaliana reference genome.</title>
        <authorList>
            <person name="Cheng C.Y."/>
            <person name="Krishnakumar V."/>
            <person name="Chan A.P."/>
            <person name="Thibaud-Nissen F."/>
            <person name="Schobel S."/>
            <person name="Town C.D."/>
        </authorList>
    </citation>
    <scope>GENOME REANNOTATION</scope>
    <source>
        <strain>cv. Columbia</strain>
    </source>
</reference>
<reference key="3">
    <citation type="submission" date="2005-02" db="EMBL/GenBank/DDBJ databases">
        <title>Arabidopsis ORF clones.</title>
        <authorList>
            <person name="Shinn P."/>
            <person name="Chen H."/>
            <person name="Cheuk R.F."/>
            <person name="Kim C.J."/>
            <person name="Ecker J.R."/>
        </authorList>
    </citation>
    <scope>NUCLEOTIDE SEQUENCE [LARGE SCALE MRNA]</scope>
    <source>
        <strain>cv. Columbia</strain>
    </source>
</reference>
<reference key="4">
    <citation type="submission" date="2005-03" db="EMBL/GenBank/DDBJ databases">
        <title>Large-scale analysis of RIKEN Arabidopsis full-length (RAFL) cDNAs.</title>
        <authorList>
            <person name="Totoki Y."/>
            <person name="Seki M."/>
            <person name="Ishida J."/>
            <person name="Nakajima M."/>
            <person name="Enju A."/>
            <person name="Kamiya A."/>
            <person name="Narusaka M."/>
            <person name="Shin-i T."/>
            <person name="Nakagawa M."/>
            <person name="Sakamoto N."/>
            <person name="Oishi K."/>
            <person name="Kohara Y."/>
            <person name="Kobayashi M."/>
            <person name="Toyoda A."/>
            <person name="Sakaki Y."/>
            <person name="Sakurai T."/>
            <person name="Iida K."/>
            <person name="Akiyama K."/>
            <person name="Satou M."/>
            <person name="Toyoda T."/>
            <person name="Konagaya A."/>
            <person name="Carninci P."/>
            <person name="Kawai J."/>
            <person name="Hayashizaki Y."/>
            <person name="Shinozaki K."/>
        </authorList>
    </citation>
    <scope>NUCLEOTIDE SEQUENCE [LARGE SCALE MRNA]</scope>
    <source>
        <strain>cv. Columbia</strain>
    </source>
</reference>
<reference key="5">
    <citation type="journal article" date="2001" name="Nucleic Acids Res.">
        <title>The Arabidopsis thaliana genome contains at least 29 active genes encoding SET domain proteins that can be assigned to four evolutionarily conserved classes.</title>
        <authorList>
            <person name="Baumbusch L.O."/>
            <person name="Thorstensen T."/>
            <person name="Krauss V."/>
            <person name="Fischer A."/>
            <person name="Naumann K."/>
            <person name="Assalkhou R."/>
            <person name="Schulz I."/>
            <person name="Reuter G."/>
            <person name="Aalen R.B."/>
        </authorList>
    </citation>
    <scope>NOMENCLATURE</scope>
</reference>
<reference key="6">
    <citation type="journal article" date="2017" name="Sci. Signal.">
        <title>Arabidopsis ATXR2 deposits H3K36me3 at the promoters of LBD genes to facilitate cellular dedifferentiation.</title>
        <authorList>
            <person name="Lee K."/>
            <person name="Park O.S."/>
            <person name="Seo P.J."/>
        </authorList>
    </citation>
    <scope>FUNCTION</scope>
    <scope>DISRUPTION PHENOTYPE</scope>
    <scope>INTERACTION WITH ARF7 AND ARF19</scope>
    <scope>SUBCELLULAR LOCATION</scope>
    <source>
        <strain>cv. Columbia</strain>
    </source>
</reference>
<reference key="7">
    <citation type="journal article" date="2018" name="Plant Signal. Behav.">
        <title>ATXR2 as a core regulator of de novo root organogenesis.</title>
        <authorList>
            <person name="Lee K."/>
            <person name="Park O.-S."/>
            <person name="Seo P.J."/>
        </authorList>
    </citation>
    <scope>FUNCTION</scope>
    <scope>DISRUPTION PHENOTYPE</scope>
    <source>
        <strain>cv. Columbia</strain>
    </source>
</reference>
<reference key="8">
    <citation type="journal article" date="2018" name="Plant J.">
        <title>JMJ30-mediated demethylation of H3K9me3 drives tissue identity changes to promote callus formation in Arabidopsis.</title>
        <authorList>
            <person name="Lee K."/>
            <person name="Park O.-S."/>
            <person name="Seo P.J."/>
        </authorList>
    </citation>
    <scope>FUNCTION</scope>
    <scope>DISRUPTION PHENOTYPE</scope>
    <scope>INTERACTION WITH JMJ30</scope>
    <source>
        <strain>cv. Columbia</strain>
    </source>
</reference>
<evidence type="ECO:0000250" key="1">
    <source>
        <dbReference type="UniProtKB" id="Q8VZJ1"/>
    </source>
</evidence>
<evidence type="ECO:0000255" key="2">
    <source>
        <dbReference type="PROSITE-ProRule" id="PRU00134"/>
    </source>
</evidence>
<evidence type="ECO:0000255" key="3">
    <source>
        <dbReference type="PROSITE-ProRule" id="PRU00190"/>
    </source>
</evidence>
<evidence type="ECO:0000269" key="4">
    <source>
    </source>
</evidence>
<evidence type="ECO:0000269" key="5">
    <source>
    </source>
</evidence>
<evidence type="ECO:0000269" key="6">
    <source>
    </source>
</evidence>
<evidence type="ECO:0000303" key="7">
    <source>
    </source>
</evidence>
<evidence type="ECO:0000305" key="8"/>
<evidence type="ECO:0000312" key="9">
    <source>
        <dbReference type="Araport" id="AT3G21820"/>
    </source>
</evidence>
<evidence type="ECO:0000312" key="10">
    <source>
        <dbReference type="EMBL" id="BAB02844.1"/>
    </source>
</evidence>
<accession>Q5PP37</accession>
<accession>Q9LSY2</accession>
<dbReference type="EC" id="2.1.1.-" evidence="3"/>
<dbReference type="EMBL" id="AB025634">
    <property type="protein sequence ID" value="BAB02844.1"/>
    <property type="status" value="ALT_SEQ"/>
    <property type="molecule type" value="Genomic_DNA"/>
</dbReference>
<dbReference type="EMBL" id="CP002686">
    <property type="protein sequence ID" value="AEE76555.1"/>
    <property type="molecule type" value="Genomic_DNA"/>
</dbReference>
<dbReference type="EMBL" id="BT020260">
    <property type="protein sequence ID" value="AAV84481.1"/>
    <property type="molecule type" value="mRNA"/>
</dbReference>
<dbReference type="EMBL" id="BT021112">
    <property type="protein sequence ID" value="AAX12882.1"/>
    <property type="molecule type" value="mRNA"/>
</dbReference>
<dbReference type="EMBL" id="AK221711">
    <property type="protein sequence ID" value="BAD95436.1"/>
    <property type="molecule type" value="mRNA"/>
</dbReference>
<dbReference type="RefSeq" id="NP_188819.2">
    <property type="nucleotide sequence ID" value="NM_113077.5"/>
</dbReference>
<dbReference type="FunCoup" id="Q5PP37">
    <property type="interactions" value="2739"/>
</dbReference>
<dbReference type="STRING" id="3702.Q5PP37"/>
<dbReference type="GlyGen" id="Q5PP37">
    <property type="glycosylation" value="2 sites"/>
</dbReference>
<dbReference type="iPTMnet" id="Q5PP37"/>
<dbReference type="PaxDb" id="3702-AT3G21820.1"/>
<dbReference type="ProteomicsDB" id="241102"/>
<dbReference type="EnsemblPlants" id="AT3G21820.1">
    <property type="protein sequence ID" value="AT3G21820.1"/>
    <property type="gene ID" value="AT3G21820"/>
</dbReference>
<dbReference type="GeneID" id="821736"/>
<dbReference type="Gramene" id="AT3G21820.1">
    <property type="protein sequence ID" value="AT3G21820.1"/>
    <property type="gene ID" value="AT3G21820"/>
</dbReference>
<dbReference type="KEGG" id="ath:AT3G21820"/>
<dbReference type="Araport" id="AT3G21820"/>
<dbReference type="TAIR" id="AT3G21820">
    <property type="gene designation" value="ATXR2"/>
</dbReference>
<dbReference type="eggNOG" id="KOG2084">
    <property type="taxonomic scope" value="Eukaryota"/>
</dbReference>
<dbReference type="HOGENOM" id="CLU_034791_0_0_1"/>
<dbReference type="InParanoid" id="Q5PP37"/>
<dbReference type="OMA" id="TYHSLLC"/>
<dbReference type="PhylomeDB" id="Q5PP37"/>
<dbReference type="PRO" id="PR:Q5PP37"/>
<dbReference type="Proteomes" id="UP000006548">
    <property type="component" value="Chromosome 3"/>
</dbReference>
<dbReference type="ExpressionAtlas" id="Q5PP37">
    <property type="expression patterns" value="baseline and differential"/>
</dbReference>
<dbReference type="GO" id="GO:0005634">
    <property type="term" value="C:nucleus"/>
    <property type="evidence" value="ECO:0000314"/>
    <property type="project" value="UniProtKB"/>
</dbReference>
<dbReference type="GO" id="GO:0046975">
    <property type="term" value="F:histone H3K36 methyltransferase activity"/>
    <property type="evidence" value="ECO:0000315"/>
    <property type="project" value="UniProtKB"/>
</dbReference>
<dbReference type="GO" id="GO:0008270">
    <property type="term" value="F:zinc ion binding"/>
    <property type="evidence" value="ECO:0007669"/>
    <property type="project" value="UniProtKB-KW"/>
</dbReference>
<dbReference type="GO" id="GO:1990110">
    <property type="term" value="P:callus formation"/>
    <property type="evidence" value="ECO:0000315"/>
    <property type="project" value="TAIR"/>
</dbReference>
<dbReference type="GO" id="GO:0040029">
    <property type="term" value="P:epigenetic regulation of gene expression"/>
    <property type="evidence" value="ECO:0000315"/>
    <property type="project" value="UniProtKB"/>
</dbReference>
<dbReference type="GO" id="GO:0010311">
    <property type="term" value="P:lateral root formation"/>
    <property type="evidence" value="ECO:0000315"/>
    <property type="project" value="UniProtKB"/>
</dbReference>
<dbReference type="GO" id="GO:0032259">
    <property type="term" value="P:methylation"/>
    <property type="evidence" value="ECO:0007669"/>
    <property type="project" value="UniProtKB-KW"/>
</dbReference>
<dbReference type="GO" id="GO:0062211">
    <property type="term" value="P:root regeneration"/>
    <property type="evidence" value="ECO:0000315"/>
    <property type="project" value="UniProtKB"/>
</dbReference>
<dbReference type="CDD" id="cd20071">
    <property type="entry name" value="SET_SMYD"/>
    <property type="match status" value="1"/>
</dbReference>
<dbReference type="Gene3D" id="6.10.140.2220">
    <property type="match status" value="1"/>
</dbReference>
<dbReference type="Gene3D" id="2.170.270.10">
    <property type="entry name" value="SET domain"/>
    <property type="match status" value="1"/>
</dbReference>
<dbReference type="InterPro" id="IPR044237">
    <property type="entry name" value="ATXR2-like"/>
</dbReference>
<dbReference type="InterPro" id="IPR001214">
    <property type="entry name" value="SET_dom"/>
</dbReference>
<dbReference type="InterPro" id="IPR046341">
    <property type="entry name" value="SET_dom_sf"/>
</dbReference>
<dbReference type="InterPro" id="IPR002893">
    <property type="entry name" value="Znf_MYND"/>
</dbReference>
<dbReference type="PANTHER" id="PTHR47436">
    <property type="entry name" value="HISTONE-LYSINE N-METHYLTRANSFERASE ATXR2"/>
    <property type="match status" value="1"/>
</dbReference>
<dbReference type="PANTHER" id="PTHR47436:SF1">
    <property type="entry name" value="SET DOMAIN-CONTAINING PROTEIN"/>
    <property type="match status" value="1"/>
</dbReference>
<dbReference type="Pfam" id="PF00856">
    <property type="entry name" value="SET"/>
    <property type="match status" value="1"/>
</dbReference>
<dbReference type="Pfam" id="PF01753">
    <property type="entry name" value="zf-MYND"/>
    <property type="match status" value="1"/>
</dbReference>
<dbReference type="SMART" id="SM00317">
    <property type="entry name" value="SET"/>
    <property type="match status" value="1"/>
</dbReference>
<dbReference type="SUPFAM" id="SSF144232">
    <property type="entry name" value="HIT/MYND zinc finger-like"/>
    <property type="match status" value="1"/>
</dbReference>
<dbReference type="SUPFAM" id="SSF82199">
    <property type="entry name" value="SET domain"/>
    <property type="match status" value="1"/>
</dbReference>
<dbReference type="PROSITE" id="PS50280">
    <property type="entry name" value="SET"/>
    <property type="match status" value="1"/>
</dbReference>
<gene>
    <name evidence="7" type="primary">ATXR2</name>
    <name type="synonym">SDG36</name>
    <name type="synonym">SET36</name>
    <name evidence="9" type="ordered locus">At3g21820</name>
    <name evidence="10" type="ORF">MSD21.13</name>
</gene>
<protein>
    <recommendedName>
        <fullName evidence="7">Histone-lysine N-methyltransferase ATXR2</fullName>
        <ecNumber evidence="3">2.1.1.-</ecNumber>
    </recommendedName>
    <alternativeName>
        <fullName>Protein SET DOMAIN GROUP 36</fullName>
    </alternativeName>
    <alternativeName>
        <fullName evidence="7">Trithorax-related protein 2</fullName>
        <shortName evidence="7">TRX-related protein 2</shortName>
    </alternativeName>
</protein>